<reference key="1">
    <citation type="journal article" date="2004" name="Nucleic Acids Res.">
        <title>The genome sequence of Bacillus cereus ATCC 10987 reveals metabolic adaptations and a large plasmid related to Bacillus anthracis pXO1.</title>
        <authorList>
            <person name="Rasko D.A."/>
            <person name="Ravel J."/>
            <person name="Oekstad O.A."/>
            <person name="Helgason E."/>
            <person name="Cer R.Z."/>
            <person name="Jiang L."/>
            <person name="Shores K.A."/>
            <person name="Fouts D.E."/>
            <person name="Tourasse N.J."/>
            <person name="Angiuoli S.V."/>
            <person name="Kolonay J.F."/>
            <person name="Nelson W.C."/>
            <person name="Kolstoe A.-B."/>
            <person name="Fraser C.M."/>
            <person name="Read T.D."/>
        </authorList>
    </citation>
    <scope>NUCLEOTIDE SEQUENCE [LARGE SCALE GENOMIC DNA]</scope>
    <source>
        <strain>ATCC 10987 / NRS 248</strain>
    </source>
</reference>
<protein>
    <recommendedName>
        <fullName evidence="1">Imidazole glycerol phosphate synthase subunit HisF</fullName>
        <ecNumber evidence="1">4.3.2.10</ecNumber>
    </recommendedName>
    <alternativeName>
        <fullName evidence="1">IGP synthase cyclase subunit</fullName>
    </alternativeName>
    <alternativeName>
        <fullName evidence="1">IGP synthase subunit HisF</fullName>
    </alternativeName>
    <alternativeName>
        <fullName evidence="1">ImGP synthase subunit HisF</fullName>
        <shortName evidence="1">IGPS subunit HisF</shortName>
    </alternativeName>
</protein>
<accession>P62449</accession>
<dbReference type="EC" id="4.3.2.10" evidence="1"/>
<dbReference type="EMBL" id="AE017194">
    <property type="protein sequence ID" value="AAS40459.1"/>
    <property type="molecule type" value="Genomic_DNA"/>
</dbReference>
<dbReference type="SMR" id="P62449"/>
<dbReference type="KEGG" id="bca:BCE_1530"/>
<dbReference type="HOGENOM" id="CLU_048577_4_0_9"/>
<dbReference type="UniPathway" id="UPA00031">
    <property type="reaction ID" value="UER00010"/>
</dbReference>
<dbReference type="Proteomes" id="UP000002527">
    <property type="component" value="Chromosome"/>
</dbReference>
<dbReference type="GO" id="GO:0005737">
    <property type="term" value="C:cytoplasm"/>
    <property type="evidence" value="ECO:0007669"/>
    <property type="project" value="UniProtKB-SubCell"/>
</dbReference>
<dbReference type="GO" id="GO:0000107">
    <property type="term" value="F:imidazoleglycerol-phosphate synthase activity"/>
    <property type="evidence" value="ECO:0007669"/>
    <property type="project" value="UniProtKB-UniRule"/>
</dbReference>
<dbReference type="GO" id="GO:0016829">
    <property type="term" value="F:lyase activity"/>
    <property type="evidence" value="ECO:0007669"/>
    <property type="project" value="UniProtKB-KW"/>
</dbReference>
<dbReference type="GO" id="GO:0000105">
    <property type="term" value="P:L-histidine biosynthetic process"/>
    <property type="evidence" value="ECO:0007669"/>
    <property type="project" value="UniProtKB-UniRule"/>
</dbReference>
<dbReference type="CDD" id="cd04731">
    <property type="entry name" value="HisF"/>
    <property type="match status" value="1"/>
</dbReference>
<dbReference type="FunFam" id="3.20.20.70:FF:000006">
    <property type="entry name" value="Imidazole glycerol phosphate synthase subunit HisF"/>
    <property type="match status" value="1"/>
</dbReference>
<dbReference type="Gene3D" id="3.20.20.70">
    <property type="entry name" value="Aldolase class I"/>
    <property type="match status" value="1"/>
</dbReference>
<dbReference type="HAMAP" id="MF_01013">
    <property type="entry name" value="HisF"/>
    <property type="match status" value="1"/>
</dbReference>
<dbReference type="InterPro" id="IPR013785">
    <property type="entry name" value="Aldolase_TIM"/>
</dbReference>
<dbReference type="InterPro" id="IPR006062">
    <property type="entry name" value="His_biosynth"/>
</dbReference>
<dbReference type="InterPro" id="IPR004651">
    <property type="entry name" value="HisF"/>
</dbReference>
<dbReference type="InterPro" id="IPR050064">
    <property type="entry name" value="IGPS_HisA/HisF"/>
</dbReference>
<dbReference type="InterPro" id="IPR011060">
    <property type="entry name" value="RibuloseP-bd_barrel"/>
</dbReference>
<dbReference type="NCBIfam" id="TIGR00735">
    <property type="entry name" value="hisF"/>
    <property type="match status" value="1"/>
</dbReference>
<dbReference type="PANTHER" id="PTHR21235:SF2">
    <property type="entry name" value="IMIDAZOLE GLYCEROL PHOSPHATE SYNTHASE HISHF"/>
    <property type="match status" value="1"/>
</dbReference>
<dbReference type="PANTHER" id="PTHR21235">
    <property type="entry name" value="IMIDAZOLE GLYCEROL PHOSPHATE SYNTHASE SUBUNIT HISF/H IGP SYNTHASE SUBUNIT HISF/H"/>
    <property type="match status" value="1"/>
</dbReference>
<dbReference type="Pfam" id="PF00977">
    <property type="entry name" value="His_biosynth"/>
    <property type="match status" value="1"/>
</dbReference>
<dbReference type="SUPFAM" id="SSF51366">
    <property type="entry name" value="Ribulose-phoshate binding barrel"/>
    <property type="match status" value="1"/>
</dbReference>
<proteinExistence type="inferred from homology"/>
<evidence type="ECO:0000255" key="1">
    <source>
        <dbReference type="HAMAP-Rule" id="MF_01013"/>
    </source>
</evidence>
<keyword id="KW-0028">Amino-acid biosynthesis</keyword>
<keyword id="KW-0963">Cytoplasm</keyword>
<keyword id="KW-0368">Histidine biosynthesis</keyword>
<keyword id="KW-0456">Lyase</keyword>
<comment type="function">
    <text evidence="1">IGPS catalyzes the conversion of PRFAR and glutamine to IGP, AICAR and glutamate. The HisF subunit catalyzes the cyclization activity that produces IGP and AICAR from PRFAR using the ammonia provided by the HisH subunit.</text>
</comment>
<comment type="catalytic activity">
    <reaction evidence="1">
        <text>5-[(5-phospho-1-deoxy-D-ribulos-1-ylimino)methylamino]-1-(5-phospho-beta-D-ribosyl)imidazole-4-carboxamide + L-glutamine = D-erythro-1-(imidazol-4-yl)glycerol 3-phosphate + 5-amino-1-(5-phospho-beta-D-ribosyl)imidazole-4-carboxamide + L-glutamate + H(+)</text>
        <dbReference type="Rhea" id="RHEA:24793"/>
        <dbReference type="ChEBI" id="CHEBI:15378"/>
        <dbReference type="ChEBI" id="CHEBI:29985"/>
        <dbReference type="ChEBI" id="CHEBI:58278"/>
        <dbReference type="ChEBI" id="CHEBI:58359"/>
        <dbReference type="ChEBI" id="CHEBI:58475"/>
        <dbReference type="ChEBI" id="CHEBI:58525"/>
        <dbReference type="EC" id="4.3.2.10"/>
    </reaction>
</comment>
<comment type="pathway">
    <text evidence="1">Amino-acid biosynthesis; L-histidine biosynthesis; L-histidine from 5-phospho-alpha-D-ribose 1-diphosphate: step 5/9.</text>
</comment>
<comment type="subunit">
    <text evidence="1">Heterodimer of HisH and HisF.</text>
</comment>
<comment type="subcellular location">
    <subcellularLocation>
        <location evidence="1">Cytoplasm</location>
    </subcellularLocation>
</comment>
<comment type="similarity">
    <text evidence="1">Belongs to the HisA/HisF family.</text>
</comment>
<name>HIS6_BACC1</name>
<organism>
    <name type="scientific">Bacillus cereus (strain ATCC 10987 / NRS 248)</name>
    <dbReference type="NCBI Taxonomy" id="222523"/>
    <lineage>
        <taxon>Bacteria</taxon>
        <taxon>Bacillati</taxon>
        <taxon>Bacillota</taxon>
        <taxon>Bacilli</taxon>
        <taxon>Bacillales</taxon>
        <taxon>Bacillaceae</taxon>
        <taxon>Bacillus</taxon>
        <taxon>Bacillus cereus group</taxon>
    </lineage>
</organism>
<sequence length="252" mass="26915">MLAKRVIPCLDVKEGRVVKGVNFIGLQDVGDPVEIAALYNDAGADEIVFLDITATHEGRKTIVDVVEKTASKVFIPLTVGGGISNVKDMYNLLRAGADKVSINSAAVRNPKLIGEGAEHFGSQCIVVAIDARKVAEDKWNVYVNGGRVDTGMDAIRWAKRVTELGAGEILLTSMDADGTKNGYDLRLTEEISKSVSVPVIASGGCGHADHIIEVFQKTAVDAALAASIFHYGEATIGDVKRKLRNANVEVRL</sequence>
<feature type="chain" id="PRO_0000142112" description="Imidazole glycerol phosphate synthase subunit HisF">
    <location>
        <begin position="1"/>
        <end position="252"/>
    </location>
</feature>
<feature type="active site" evidence="1">
    <location>
        <position position="11"/>
    </location>
</feature>
<feature type="active site" evidence="1">
    <location>
        <position position="130"/>
    </location>
</feature>
<gene>
    <name evidence="1" type="primary">hisF</name>
    <name type="ordered locus">BCE_1530</name>
</gene>